<organism>
    <name type="scientific">Mycolicibacterium smegmatis (strain ATCC 700084 / mc(2)155)</name>
    <name type="common">Mycobacterium smegmatis</name>
    <dbReference type="NCBI Taxonomy" id="246196"/>
    <lineage>
        <taxon>Bacteria</taxon>
        <taxon>Bacillati</taxon>
        <taxon>Actinomycetota</taxon>
        <taxon>Actinomycetes</taxon>
        <taxon>Mycobacteriales</taxon>
        <taxon>Mycobacteriaceae</taxon>
        <taxon>Mycolicibacterium</taxon>
    </lineage>
</organism>
<proteinExistence type="evidence at protein level"/>
<feature type="chain" id="PRO_0000420584" description="Decaprenyl-phosphate N-acetylglucosaminephosphotransferase">
    <location>
        <begin position="1"/>
        <end position="406"/>
    </location>
</feature>
<feature type="transmembrane region" description="Helical" evidence="2">
    <location>
        <begin position="40"/>
        <end position="60"/>
    </location>
</feature>
<feature type="transmembrane region" description="Helical" evidence="2">
    <location>
        <begin position="83"/>
        <end position="103"/>
    </location>
</feature>
<feature type="transmembrane region" description="Helical" evidence="2">
    <location>
        <begin position="109"/>
        <end position="129"/>
    </location>
</feature>
<feature type="transmembrane region" description="Helical" evidence="2">
    <location>
        <begin position="152"/>
        <end position="172"/>
    </location>
</feature>
<feature type="transmembrane region" description="Helical" evidence="2">
    <location>
        <begin position="176"/>
        <end position="196"/>
    </location>
</feature>
<feature type="transmembrane region" description="Helical" evidence="2">
    <location>
        <begin position="202"/>
        <end position="222"/>
    </location>
</feature>
<feature type="transmembrane region" description="Helical" evidence="2">
    <location>
        <begin position="229"/>
        <end position="249"/>
    </location>
</feature>
<feature type="transmembrane region" description="Helical" evidence="2">
    <location>
        <begin position="263"/>
        <end position="283"/>
    </location>
</feature>
<feature type="transmembrane region" description="Helical" evidence="2">
    <location>
        <begin position="299"/>
        <end position="319"/>
    </location>
</feature>
<feature type="transmembrane region" description="Helical" evidence="2">
    <location>
        <begin position="351"/>
        <end position="371"/>
    </location>
</feature>
<feature type="transmembrane region" description="Helical" evidence="2">
    <location>
        <begin position="376"/>
        <end position="396"/>
    </location>
</feature>
<dbReference type="EC" id="2.7.8.35"/>
<dbReference type="EMBL" id="CP000480">
    <property type="protein sequence ID" value="ABK71461.1"/>
    <property type="molecule type" value="Genomic_DNA"/>
</dbReference>
<dbReference type="EMBL" id="CP001663">
    <property type="protein sequence ID" value="AFP41264.1"/>
    <property type="molecule type" value="Genomic_DNA"/>
</dbReference>
<dbReference type="RefSeq" id="YP_889199.1">
    <property type="nucleotide sequence ID" value="NC_008596.1"/>
</dbReference>
<dbReference type="SMR" id="A0R211"/>
<dbReference type="STRING" id="246196.MSMEG_4947"/>
<dbReference type="BindingDB" id="A0R211"/>
<dbReference type="ChEMBL" id="CHEMBL5291591"/>
<dbReference type="PaxDb" id="246196-MSMEI_4819"/>
<dbReference type="KEGG" id="msb:LJ00_24460"/>
<dbReference type="KEGG" id="msg:MSMEI_4819"/>
<dbReference type="KEGG" id="msm:MSMEG_4947"/>
<dbReference type="PATRIC" id="fig|246196.19.peg.4826"/>
<dbReference type="eggNOG" id="COG0472">
    <property type="taxonomic scope" value="Bacteria"/>
</dbReference>
<dbReference type="OrthoDB" id="9783652at2"/>
<dbReference type="BRENDA" id="2.7.8.35">
    <property type="organism ID" value="3512"/>
</dbReference>
<dbReference type="UniPathway" id="UPA00963"/>
<dbReference type="Proteomes" id="UP000000757">
    <property type="component" value="Chromosome"/>
</dbReference>
<dbReference type="Proteomes" id="UP000006158">
    <property type="component" value="Chromosome"/>
</dbReference>
<dbReference type="GO" id="GO:0005886">
    <property type="term" value="C:plasma membrane"/>
    <property type="evidence" value="ECO:0007669"/>
    <property type="project" value="UniProtKB-SubCell"/>
</dbReference>
<dbReference type="GO" id="GO:0016757">
    <property type="term" value="F:glycosyltransferase activity"/>
    <property type="evidence" value="ECO:0007669"/>
    <property type="project" value="UniProtKB-KW"/>
</dbReference>
<dbReference type="GO" id="GO:0016780">
    <property type="term" value="F:phosphotransferase activity, for other substituted phosphate groups"/>
    <property type="evidence" value="ECO:0007669"/>
    <property type="project" value="InterPro"/>
</dbReference>
<dbReference type="GO" id="GO:0045227">
    <property type="term" value="P:capsule polysaccharide biosynthetic process"/>
    <property type="evidence" value="ECO:0007669"/>
    <property type="project" value="UniProtKB-UniPathway"/>
</dbReference>
<dbReference type="GO" id="GO:0044038">
    <property type="term" value="P:cell wall macromolecule biosynthetic process"/>
    <property type="evidence" value="ECO:0007669"/>
    <property type="project" value="TreeGrafter"/>
</dbReference>
<dbReference type="GO" id="GO:0071555">
    <property type="term" value="P:cell wall organization"/>
    <property type="evidence" value="ECO:0007669"/>
    <property type="project" value="UniProtKB-KW"/>
</dbReference>
<dbReference type="GO" id="GO:0009103">
    <property type="term" value="P:lipopolysaccharide biosynthetic process"/>
    <property type="evidence" value="ECO:0007669"/>
    <property type="project" value="TreeGrafter"/>
</dbReference>
<dbReference type="CDD" id="cd06853">
    <property type="entry name" value="GT_WecA_like"/>
    <property type="match status" value="1"/>
</dbReference>
<dbReference type="InterPro" id="IPR000715">
    <property type="entry name" value="Glycosyl_transferase_4"/>
</dbReference>
<dbReference type="PANTHER" id="PTHR22926">
    <property type="entry name" value="PHOSPHO-N-ACETYLMURAMOYL-PENTAPEPTIDE-TRANSFERASE"/>
    <property type="match status" value="1"/>
</dbReference>
<dbReference type="PANTHER" id="PTHR22926:SF3">
    <property type="entry name" value="UNDECAPRENYL-PHOSPHATE ALPHA-N-ACETYLGLUCOSAMINYL 1-PHOSPHATE TRANSFERASE"/>
    <property type="match status" value="1"/>
</dbReference>
<dbReference type="Pfam" id="PF00953">
    <property type="entry name" value="Glycos_transf_4"/>
    <property type="match status" value="1"/>
</dbReference>
<gene>
    <name type="primary">wecA</name>
    <name type="ordered locus">MSMEG_4947</name>
    <name type="ordered locus">MSMEI_4819</name>
</gene>
<comment type="function">
    <text evidence="3">Involved in the biosynthesis of the disaccharide D-N-acetylglucosamine-L-rhamnose which plays an important role in the mycobacterial cell wall as a linker connecting arabinogalactan and peptidoglycan via a phosphodiester linkage. Catalyzes the transfer of the N-acetylglucosamine-1-phosphate (GlcNAc-1P) moiety from UDP-GlcNAc onto the carrier lipid decaprenyl phosphate (C50-P), yielding GlcNAc-pyrophosphoryl-decaprenyl (GlcNAc-PP-C50).</text>
</comment>
<comment type="catalytic activity">
    <reaction evidence="3">
        <text>trans,octa-cis-decaprenyl phosphate + UDP-N-acetyl-alpha-D-glucosamine = N-acetyl-alpha-D-glucosaminyl-1-diphospho-trans,octa-cis-decaprenol + UMP</text>
        <dbReference type="Rhea" id="RHEA:34071"/>
        <dbReference type="ChEBI" id="CHEBI:57705"/>
        <dbReference type="ChEBI" id="CHEBI:57865"/>
        <dbReference type="ChEBI" id="CHEBI:65079"/>
        <dbReference type="ChEBI" id="CHEBI:65080"/>
        <dbReference type="EC" id="2.7.8.35"/>
    </reaction>
</comment>
<comment type="cofactor">
    <cofactor evidence="1">
        <name>Mg(2+)</name>
        <dbReference type="ChEBI" id="CHEBI:18420"/>
    </cofactor>
</comment>
<comment type="cofactor">
    <cofactor evidence="1">
        <name>Mn(2+)</name>
        <dbReference type="ChEBI" id="CHEBI:29035"/>
    </cofactor>
</comment>
<comment type="activity regulation">
    <text evidence="4">Inhibited by tunicamycin.</text>
</comment>
<comment type="pathway">
    <text>Cell wall biogenesis; cell wall polysaccharide biosynthesis.</text>
</comment>
<comment type="subcellular location">
    <subcellularLocation>
        <location evidence="7">Cell membrane</location>
        <topology evidence="5">Multi-pass membrane protein</topology>
    </subcellularLocation>
</comment>
<comment type="disruption phenotype">
    <text evidence="3">Cells lacking this gene show drastic morphological alterations before lysis and are unable to grow.</text>
</comment>
<comment type="miscellaneous">
    <text evidence="6">Mycobacteria use decaprenyl phosphate (C50-P) as a lipid carrier in all known cell wall biosynthetic pathways, rather than the usual undecaprenyl phosphate (C55-P) usually used in Gram-negative bacteria.</text>
</comment>
<comment type="similarity">
    <text evidence="5">Belongs to the glycosyltransferase 4 family. WecA subfamily.</text>
</comment>
<protein>
    <recommendedName>
        <fullName>Decaprenyl-phosphate N-acetylglucosaminephosphotransferase</fullName>
        <ecNumber>2.7.8.35</ecNumber>
    </recommendedName>
    <alternativeName>
        <fullName>Decaprenyl-phosphate GlcNAc-1-phosphate transferase</fullName>
    </alternativeName>
    <alternativeName>
        <fullName>Decaprenyl-phosphate alpha-N-acetylglucosaminyl 1-phosphate transferase</fullName>
    </alternativeName>
    <alternativeName>
        <fullName>UDP-GlcNAc:decaprenyl-phosphate GlcNAc-1-phosphate transferase</fullName>
    </alternativeName>
    <alternativeName>
        <fullName>UDP-N-acetylglucosamine--decaprenyl-phosphate N-acetylglucosaminephosphotransferase</fullName>
    </alternativeName>
</protein>
<accession>A0R211</accession>
<evidence type="ECO:0000250" key="1"/>
<evidence type="ECO:0000255" key="2"/>
<evidence type="ECO:0000269" key="3">
    <source>
    </source>
</evidence>
<evidence type="ECO:0000269" key="4">
    <source>
    </source>
</evidence>
<evidence type="ECO:0000305" key="5"/>
<evidence type="ECO:0000305" key="6">
    <source>
    </source>
</evidence>
<evidence type="ECO:0000305" key="7">
    <source>
    </source>
</evidence>
<reference key="1">
    <citation type="submission" date="2006-10" db="EMBL/GenBank/DDBJ databases">
        <authorList>
            <person name="Fleischmann R.D."/>
            <person name="Dodson R.J."/>
            <person name="Haft D.H."/>
            <person name="Merkel J.S."/>
            <person name="Nelson W.C."/>
            <person name="Fraser C.M."/>
        </authorList>
    </citation>
    <scope>NUCLEOTIDE SEQUENCE [LARGE SCALE GENOMIC DNA]</scope>
    <source>
        <strain>ATCC 700084 / mc(2)155</strain>
    </source>
</reference>
<reference key="2">
    <citation type="journal article" date="2007" name="Genome Biol.">
        <title>Interrupted coding sequences in Mycobacterium smegmatis: authentic mutations or sequencing errors?</title>
        <authorList>
            <person name="Deshayes C."/>
            <person name="Perrodou E."/>
            <person name="Gallien S."/>
            <person name="Euphrasie D."/>
            <person name="Schaeffer C."/>
            <person name="Van-Dorsselaer A."/>
            <person name="Poch O."/>
            <person name="Lecompte O."/>
            <person name="Reyrat J.-M."/>
        </authorList>
    </citation>
    <scope>NUCLEOTIDE SEQUENCE [LARGE SCALE GENOMIC DNA]</scope>
    <source>
        <strain>ATCC 700084 / mc(2)155</strain>
    </source>
</reference>
<reference key="3">
    <citation type="journal article" date="2009" name="Genome Res.">
        <title>Ortho-proteogenomics: multiple proteomes investigation through orthology and a new MS-based protocol.</title>
        <authorList>
            <person name="Gallien S."/>
            <person name="Perrodou E."/>
            <person name="Carapito C."/>
            <person name="Deshayes C."/>
            <person name="Reyrat J.-M."/>
            <person name="Van Dorsselaer A."/>
            <person name="Poch O."/>
            <person name="Schaeffer C."/>
            <person name="Lecompte O."/>
        </authorList>
    </citation>
    <scope>NUCLEOTIDE SEQUENCE [LARGE SCALE GENOMIC DNA]</scope>
    <source>
        <strain>ATCC 700084 / mc(2)155</strain>
    </source>
</reference>
<reference key="4">
    <citation type="journal article" date="1996" name="J. Biol. Chem.">
        <title>Biosynthesis of the linkaFge region of the mycobacterial cell wall.</title>
        <authorList>
            <person name="Mikusova K."/>
            <person name="Mikus M."/>
            <person name="Besra G.S."/>
            <person name="Hancock I."/>
            <person name="Brennan P.J."/>
        </authorList>
    </citation>
    <scope>SUBCELLULAR LOCATION</scope>
    <scope>ACTIVITY REGULATION</scope>
</reference>
<reference key="5">
    <citation type="journal article" date="2005" name="J. Bacteriol.">
        <title>Mycobacterial lipid II is composed of a complex mixture of modified muramyl and peptide moieties linked to decaprenyl phosphate.</title>
        <authorList>
            <person name="Mahapatra S."/>
            <person name="Yagi T."/>
            <person name="Belisle J.T."/>
            <person name="Espinosa B.J."/>
            <person name="Hill P.J."/>
            <person name="McNeil M.R."/>
            <person name="Brennan P.J."/>
            <person name="Crick D.C."/>
        </authorList>
    </citation>
    <scope>LIPID CARRIER SPECIFICITY</scope>
</reference>
<reference key="6">
    <citation type="journal article" date="2010" name="FEMS Microbiol. Lett.">
        <title>Mycobacterium tuberculosis Rv1302 and Mycobacterium smegmatis MSMEG_4947 have WecA function and MSMEG_4947 is required for the growth of M. smegmatis.</title>
        <authorList>
            <person name="Jin Y."/>
            <person name="Xin Y."/>
            <person name="Zhang W."/>
            <person name="Ma Y."/>
        </authorList>
    </citation>
    <scope>FUNCTION</scope>
    <scope>CATALYTIC ACTIVITY</scope>
    <scope>DISRUPTION PHENOTYPE</scope>
</reference>
<sequence>MLQYGAPVITATRETGMDSQVVLALSDTGAGVPLRELALVGLTAAIITYFATGWVRVLAIRFGAVAYPRERDVHVQPTPRMGGLAMYIGVASAVLLASQLPALTRGFVYSTGMPAVVVAGGLIMAIGLIDDRWGLDALTKFAGQITAASVLVTMGVAWSVLYIPIGGVGTIVLDQVSSILLTLALTVSIINAMNFVDGLDGLAAGLGLITALAICVFSVGLLRDHGGDVLFYPPAVISVVLAGACLGFLPHNFHRAKIFMGDSGSMLIGLMLGAASTTAAGPISQNAYGARDVFALLSPFLLVVAVMLVPALDTLLAIVRRTRAGRSPLSPDKMHLHHRLLQIGHSHRRAVLLIYLWVGIIAFGAASTIFFDPGQTAMVMGVAIVVAIVVTLIPLLRRGPDGAQEP</sequence>
<keyword id="KW-1003">Cell membrane</keyword>
<keyword id="KW-0961">Cell wall biogenesis/degradation</keyword>
<keyword id="KW-0328">Glycosyltransferase</keyword>
<keyword id="KW-0460">Magnesium</keyword>
<keyword id="KW-0464">Manganese</keyword>
<keyword id="KW-0472">Membrane</keyword>
<keyword id="KW-1185">Reference proteome</keyword>
<keyword id="KW-0808">Transferase</keyword>
<keyword id="KW-0812">Transmembrane</keyword>
<keyword id="KW-1133">Transmembrane helix</keyword>
<name>WECA_MYCS2</name>